<feature type="chain" id="PRO_0000428249" description="Small ribosomal subunit protein bS18A">
    <location>
        <begin position="1"/>
        <end position="84"/>
    </location>
</feature>
<name>RS181_MYCTO</name>
<dbReference type="EMBL" id="AE000516">
    <property type="protein sequence ID" value="AAK44283.1"/>
    <property type="molecule type" value="Genomic_DNA"/>
</dbReference>
<dbReference type="PIR" id="G70913">
    <property type="entry name" value="G70913"/>
</dbReference>
<dbReference type="RefSeq" id="WP_003400540.1">
    <property type="nucleotide sequence ID" value="NZ_KK341227.1"/>
</dbReference>
<dbReference type="SMR" id="P9WH48"/>
<dbReference type="GeneID" id="45424014"/>
<dbReference type="KEGG" id="mtc:MT0061"/>
<dbReference type="PATRIC" id="fig|83331.31.peg.61"/>
<dbReference type="HOGENOM" id="CLU_148710_2_2_11"/>
<dbReference type="Proteomes" id="UP000001020">
    <property type="component" value="Chromosome"/>
</dbReference>
<dbReference type="GO" id="GO:0022627">
    <property type="term" value="C:cytosolic small ribosomal subunit"/>
    <property type="evidence" value="ECO:0007669"/>
    <property type="project" value="TreeGrafter"/>
</dbReference>
<dbReference type="GO" id="GO:0070181">
    <property type="term" value="F:small ribosomal subunit rRNA binding"/>
    <property type="evidence" value="ECO:0007669"/>
    <property type="project" value="TreeGrafter"/>
</dbReference>
<dbReference type="GO" id="GO:0003735">
    <property type="term" value="F:structural constituent of ribosome"/>
    <property type="evidence" value="ECO:0007669"/>
    <property type="project" value="InterPro"/>
</dbReference>
<dbReference type="GO" id="GO:0006412">
    <property type="term" value="P:translation"/>
    <property type="evidence" value="ECO:0007669"/>
    <property type="project" value="UniProtKB-UniRule"/>
</dbReference>
<dbReference type="FunFam" id="4.10.640.10:FF:000004">
    <property type="entry name" value="30S ribosomal protein S18"/>
    <property type="match status" value="1"/>
</dbReference>
<dbReference type="Gene3D" id="4.10.640.10">
    <property type="entry name" value="Ribosomal protein S18"/>
    <property type="match status" value="1"/>
</dbReference>
<dbReference type="HAMAP" id="MF_00270">
    <property type="entry name" value="Ribosomal_bS18"/>
    <property type="match status" value="1"/>
</dbReference>
<dbReference type="InterPro" id="IPR001648">
    <property type="entry name" value="Ribosomal_bS18"/>
</dbReference>
<dbReference type="InterPro" id="IPR018275">
    <property type="entry name" value="Ribosomal_bS18_CS"/>
</dbReference>
<dbReference type="InterPro" id="IPR036870">
    <property type="entry name" value="Ribosomal_bS18_sf"/>
</dbReference>
<dbReference type="NCBIfam" id="TIGR00165">
    <property type="entry name" value="S18"/>
    <property type="match status" value="1"/>
</dbReference>
<dbReference type="PANTHER" id="PTHR13479">
    <property type="entry name" value="30S RIBOSOMAL PROTEIN S18"/>
    <property type="match status" value="1"/>
</dbReference>
<dbReference type="PANTHER" id="PTHR13479:SF62">
    <property type="entry name" value="SMALL RIBOSOMAL SUBUNIT PROTEIN BS18A"/>
    <property type="match status" value="1"/>
</dbReference>
<dbReference type="Pfam" id="PF01084">
    <property type="entry name" value="Ribosomal_S18"/>
    <property type="match status" value="1"/>
</dbReference>
<dbReference type="PRINTS" id="PR00974">
    <property type="entry name" value="RIBOSOMALS18"/>
</dbReference>
<dbReference type="SUPFAM" id="SSF46911">
    <property type="entry name" value="Ribosomal protein S18"/>
    <property type="match status" value="1"/>
</dbReference>
<dbReference type="PROSITE" id="PS00057">
    <property type="entry name" value="RIBOSOMAL_S18"/>
    <property type="match status" value="1"/>
</dbReference>
<keyword id="KW-1185">Reference proteome</keyword>
<keyword id="KW-0687">Ribonucleoprotein</keyword>
<keyword id="KW-0689">Ribosomal protein</keyword>
<keyword id="KW-0694">RNA-binding</keyword>
<keyword id="KW-0699">rRNA-binding</keyword>
<reference key="1">
    <citation type="journal article" date="2002" name="J. Bacteriol.">
        <title>Whole-genome comparison of Mycobacterium tuberculosis clinical and laboratory strains.</title>
        <authorList>
            <person name="Fleischmann R.D."/>
            <person name="Alland D."/>
            <person name="Eisen J.A."/>
            <person name="Carpenter L."/>
            <person name="White O."/>
            <person name="Peterson J.D."/>
            <person name="DeBoy R.T."/>
            <person name="Dodson R.J."/>
            <person name="Gwinn M.L."/>
            <person name="Haft D.H."/>
            <person name="Hickey E.K."/>
            <person name="Kolonay J.F."/>
            <person name="Nelson W.C."/>
            <person name="Umayam L.A."/>
            <person name="Ermolaeva M.D."/>
            <person name="Salzberg S.L."/>
            <person name="Delcher A."/>
            <person name="Utterback T.R."/>
            <person name="Weidman J.F."/>
            <person name="Khouri H.M."/>
            <person name="Gill J."/>
            <person name="Mikula A."/>
            <person name="Bishai W."/>
            <person name="Jacobs W.R. Jr."/>
            <person name="Venter J.C."/>
            <person name="Fraser C.M."/>
        </authorList>
    </citation>
    <scope>NUCLEOTIDE SEQUENCE [LARGE SCALE GENOMIC DNA]</scope>
    <source>
        <strain>CDC 1551 / Oshkosh</strain>
    </source>
</reference>
<evidence type="ECO:0000255" key="1">
    <source>
        <dbReference type="HAMAP-Rule" id="MF_00270"/>
    </source>
</evidence>
<evidence type="ECO:0000305" key="2"/>
<protein>
    <recommendedName>
        <fullName evidence="1">Small ribosomal subunit protein bS18A</fullName>
    </recommendedName>
    <alternativeName>
        <fullName evidence="2">30S ribosomal protein S18 1</fullName>
    </alternativeName>
</protein>
<accession>P9WH48</accession>
<accession>L0T5D7</accession>
<accession>P69230</accession>
<accession>P71712</accession>
<organism>
    <name type="scientific">Mycobacterium tuberculosis (strain CDC 1551 / Oshkosh)</name>
    <dbReference type="NCBI Taxonomy" id="83331"/>
    <lineage>
        <taxon>Bacteria</taxon>
        <taxon>Bacillati</taxon>
        <taxon>Actinomycetota</taxon>
        <taxon>Actinomycetes</taxon>
        <taxon>Mycobacteriales</taxon>
        <taxon>Mycobacteriaceae</taxon>
        <taxon>Mycobacterium</taxon>
        <taxon>Mycobacterium tuberculosis complex</taxon>
    </lineage>
</organism>
<gene>
    <name evidence="1" type="primary">rpsR1</name>
    <name type="synonym">rpsR</name>
    <name type="ordered locus">MT0061</name>
</gene>
<comment type="function">
    <text evidence="1">Binds as a heterodimer with protein bS6 to the central domain of the 16S rRNA, where it helps stabilize the platform of the 30S subunit.</text>
</comment>
<comment type="subunit">
    <text evidence="1">Part of the 30S ribosomal subunit. Forms a tight heterodimer with protein bS6.</text>
</comment>
<comment type="similarity">
    <text evidence="1">Belongs to the bacterial ribosomal protein bS18 family.</text>
</comment>
<sequence>MAKSSKRRPAPEKPVKTRKCVFCAKKDQAIDYKDTALLRTYISERGKIRARRVTGNCVQHQRDIALAVKNAREVALLPFTSSVR</sequence>
<proteinExistence type="inferred from homology"/>